<name>EX7S_CLOBL</name>
<protein>
    <recommendedName>
        <fullName evidence="1">Exodeoxyribonuclease 7 small subunit</fullName>
        <ecNumber evidence="1">3.1.11.6</ecNumber>
    </recommendedName>
    <alternativeName>
        <fullName evidence="1">Exodeoxyribonuclease VII small subunit</fullName>
        <shortName evidence="1">Exonuclease VII small subunit</shortName>
    </alternativeName>
</protein>
<keyword id="KW-0963">Cytoplasm</keyword>
<keyword id="KW-0269">Exonuclease</keyword>
<keyword id="KW-0378">Hydrolase</keyword>
<keyword id="KW-0540">Nuclease</keyword>
<reference key="1">
    <citation type="submission" date="2007-06" db="EMBL/GenBank/DDBJ databases">
        <authorList>
            <person name="Brinkac L.M."/>
            <person name="Daugherty S."/>
            <person name="Dodson R.J."/>
            <person name="Madupu R."/>
            <person name="Brown J.L."/>
            <person name="Bruce D."/>
            <person name="Detter C."/>
            <person name="Munk C."/>
            <person name="Smith L.A."/>
            <person name="Smith T.J."/>
            <person name="White O."/>
            <person name="Brettin T.S."/>
        </authorList>
    </citation>
    <scope>NUCLEOTIDE SEQUENCE [LARGE SCALE GENOMIC DNA]</scope>
    <source>
        <strain>Langeland / NCTC 10281 / Type F</strain>
    </source>
</reference>
<comment type="function">
    <text evidence="1">Bidirectionally degrades single-stranded DNA into large acid-insoluble oligonucleotides, which are then degraded further into small acid-soluble oligonucleotides.</text>
</comment>
<comment type="catalytic activity">
    <reaction evidence="1">
        <text>Exonucleolytic cleavage in either 5'- to 3'- or 3'- to 5'-direction to yield nucleoside 5'-phosphates.</text>
        <dbReference type="EC" id="3.1.11.6"/>
    </reaction>
</comment>
<comment type="subunit">
    <text evidence="1">Heterooligomer composed of large and small subunits.</text>
</comment>
<comment type="subcellular location">
    <subcellularLocation>
        <location evidence="1">Cytoplasm</location>
    </subcellularLocation>
</comment>
<comment type="similarity">
    <text evidence="1">Belongs to the XseB family.</text>
</comment>
<sequence length="71" mass="8238">MGRKKESFENMLEKLETIVDSMDNGEITLEDSMKSYEEGIKLCNKLYKVLKDAEGKIKILEDNKEEDFESS</sequence>
<dbReference type="EC" id="3.1.11.6" evidence="1"/>
<dbReference type="EMBL" id="CP000728">
    <property type="protein sequence ID" value="ABS41648.1"/>
    <property type="molecule type" value="Genomic_DNA"/>
</dbReference>
<dbReference type="RefSeq" id="WP_012099921.1">
    <property type="nucleotide sequence ID" value="NC_009699.1"/>
</dbReference>
<dbReference type="SMR" id="A7GEJ6"/>
<dbReference type="KEGG" id="cbf:CLI_1948"/>
<dbReference type="HOGENOM" id="CLU_145918_3_2_9"/>
<dbReference type="Proteomes" id="UP000002410">
    <property type="component" value="Chromosome"/>
</dbReference>
<dbReference type="GO" id="GO:0005829">
    <property type="term" value="C:cytosol"/>
    <property type="evidence" value="ECO:0007669"/>
    <property type="project" value="TreeGrafter"/>
</dbReference>
<dbReference type="GO" id="GO:0009318">
    <property type="term" value="C:exodeoxyribonuclease VII complex"/>
    <property type="evidence" value="ECO:0007669"/>
    <property type="project" value="InterPro"/>
</dbReference>
<dbReference type="GO" id="GO:0008855">
    <property type="term" value="F:exodeoxyribonuclease VII activity"/>
    <property type="evidence" value="ECO:0007669"/>
    <property type="project" value="UniProtKB-UniRule"/>
</dbReference>
<dbReference type="GO" id="GO:0006308">
    <property type="term" value="P:DNA catabolic process"/>
    <property type="evidence" value="ECO:0007669"/>
    <property type="project" value="UniProtKB-UniRule"/>
</dbReference>
<dbReference type="FunFam" id="1.10.287.1040:FF:000010">
    <property type="entry name" value="Exodeoxyribonuclease 7 small subunit"/>
    <property type="match status" value="1"/>
</dbReference>
<dbReference type="Gene3D" id="1.10.287.1040">
    <property type="entry name" value="Exonuclease VII, small subunit"/>
    <property type="match status" value="1"/>
</dbReference>
<dbReference type="HAMAP" id="MF_00337">
    <property type="entry name" value="Exonuc_7_S"/>
    <property type="match status" value="1"/>
</dbReference>
<dbReference type="InterPro" id="IPR003761">
    <property type="entry name" value="Exonuc_VII_S"/>
</dbReference>
<dbReference type="InterPro" id="IPR037004">
    <property type="entry name" value="Exonuc_VII_ssu_sf"/>
</dbReference>
<dbReference type="NCBIfam" id="NF002140">
    <property type="entry name" value="PRK00977.1-4"/>
    <property type="match status" value="1"/>
</dbReference>
<dbReference type="NCBIfam" id="TIGR01280">
    <property type="entry name" value="xseB"/>
    <property type="match status" value="1"/>
</dbReference>
<dbReference type="PANTHER" id="PTHR34137">
    <property type="entry name" value="EXODEOXYRIBONUCLEASE 7 SMALL SUBUNIT"/>
    <property type="match status" value="1"/>
</dbReference>
<dbReference type="PANTHER" id="PTHR34137:SF1">
    <property type="entry name" value="EXODEOXYRIBONUCLEASE 7 SMALL SUBUNIT"/>
    <property type="match status" value="1"/>
</dbReference>
<dbReference type="Pfam" id="PF02609">
    <property type="entry name" value="Exonuc_VII_S"/>
    <property type="match status" value="1"/>
</dbReference>
<dbReference type="PIRSF" id="PIRSF006488">
    <property type="entry name" value="Exonuc_VII_S"/>
    <property type="match status" value="1"/>
</dbReference>
<dbReference type="SUPFAM" id="SSF116842">
    <property type="entry name" value="XseB-like"/>
    <property type="match status" value="1"/>
</dbReference>
<gene>
    <name evidence="1" type="primary">xseB</name>
    <name type="ordered locus">CLI_1948</name>
</gene>
<evidence type="ECO:0000255" key="1">
    <source>
        <dbReference type="HAMAP-Rule" id="MF_00337"/>
    </source>
</evidence>
<feature type="chain" id="PRO_1000019578" description="Exodeoxyribonuclease 7 small subunit">
    <location>
        <begin position="1"/>
        <end position="71"/>
    </location>
</feature>
<organism>
    <name type="scientific">Clostridium botulinum (strain Langeland / NCTC 10281 / Type F)</name>
    <dbReference type="NCBI Taxonomy" id="441772"/>
    <lineage>
        <taxon>Bacteria</taxon>
        <taxon>Bacillati</taxon>
        <taxon>Bacillota</taxon>
        <taxon>Clostridia</taxon>
        <taxon>Eubacteriales</taxon>
        <taxon>Clostridiaceae</taxon>
        <taxon>Clostridium</taxon>
    </lineage>
</organism>
<accession>A7GEJ6</accession>
<proteinExistence type="inferred from homology"/>